<protein>
    <recommendedName>
        <fullName evidence="1">DNA-directed RNA polymerase subunit omega</fullName>
        <shortName evidence="1">RNAP omega subunit</shortName>
        <ecNumber evidence="1">2.7.7.6</ecNumber>
    </recommendedName>
    <alternativeName>
        <fullName evidence="1">RNA polymerase omega subunit</fullName>
    </alternativeName>
    <alternativeName>
        <fullName evidence="1">Transcriptase subunit omega</fullName>
    </alternativeName>
</protein>
<feature type="chain" id="PRO_1000121266" description="DNA-directed RNA polymerase subunit omega">
    <location>
        <begin position="1"/>
        <end position="91"/>
    </location>
</feature>
<name>RPOZ_SALEP</name>
<keyword id="KW-0240">DNA-directed RNA polymerase</keyword>
<keyword id="KW-0548">Nucleotidyltransferase</keyword>
<keyword id="KW-0804">Transcription</keyword>
<keyword id="KW-0808">Transferase</keyword>
<sequence>MARVTVQDAVEKIGNRFDLVLVAARRARQMQVGGKDPLVPEENDKTTVIALREIEEGLINNQILDVRERQEQQEQEAAELQAVTAIAEGRR</sequence>
<proteinExistence type="inferred from homology"/>
<accession>B5QTY1</accession>
<reference key="1">
    <citation type="journal article" date="2008" name="Genome Res.">
        <title>Comparative genome analysis of Salmonella enteritidis PT4 and Salmonella gallinarum 287/91 provides insights into evolutionary and host adaptation pathways.</title>
        <authorList>
            <person name="Thomson N.R."/>
            <person name="Clayton D.J."/>
            <person name="Windhorst D."/>
            <person name="Vernikos G."/>
            <person name="Davidson S."/>
            <person name="Churcher C."/>
            <person name="Quail M.A."/>
            <person name="Stevens M."/>
            <person name="Jones M.A."/>
            <person name="Watson M."/>
            <person name="Barron A."/>
            <person name="Layton A."/>
            <person name="Pickard D."/>
            <person name="Kingsley R.A."/>
            <person name="Bignell A."/>
            <person name="Clark L."/>
            <person name="Harris B."/>
            <person name="Ormond D."/>
            <person name="Abdellah Z."/>
            <person name="Brooks K."/>
            <person name="Cherevach I."/>
            <person name="Chillingworth T."/>
            <person name="Woodward J."/>
            <person name="Norberczak H."/>
            <person name="Lord A."/>
            <person name="Arrowsmith C."/>
            <person name="Jagels K."/>
            <person name="Moule S."/>
            <person name="Mungall K."/>
            <person name="Saunders M."/>
            <person name="Whitehead S."/>
            <person name="Chabalgoity J.A."/>
            <person name="Maskell D."/>
            <person name="Humphreys T."/>
            <person name="Roberts M."/>
            <person name="Barrow P.A."/>
            <person name="Dougan G."/>
            <person name="Parkhill J."/>
        </authorList>
    </citation>
    <scope>NUCLEOTIDE SEQUENCE [LARGE SCALE GENOMIC DNA]</scope>
    <source>
        <strain>P125109</strain>
    </source>
</reference>
<organism>
    <name type="scientific">Salmonella enteritidis PT4 (strain P125109)</name>
    <dbReference type="NCBI Taxonomy" id="550537"/>
    <lineage>
        <taxon>Bacteria</taxon>
        <taxon>Pseudomonadati</taxon>
        <taxon>Pseudomonadota</taxon>
        <taxon>Gammaproteobacteria</taxon>
        <taxon>Enterobacterales</taxon>
        <taxon>Enterobacteriaceae</taxon>
        <taxon>Salmonella</taxon>
    </lineage>
</organism>
<comment type="function">
    <text evidence="1">Promotes RNA polymerase assembly. Latches the N- and C-terminal regions of the beta' subunit thereby facilitating its interaction with the beta and alpha subunits.</text>
</comment>
<comment type="catalytic activity">
    <reaction evidence="1">
        <text>RNA(n) + a ribonucleoside 5'-triphosphate = RNA(n+1) + diphosphate</text>
        <dbReference type="Rhea" id="RHEA:21248"/>
        <dbReference type="Rhea" id="RHEA-COMP:14527"/>
        <dbReference type="Rhea" id="RHEA-COMP:17342"/>
        <dbReference type="ChEBI" id="CHEBI:33019"/>
        <dbReference type="ChEBI" id="CHEBI:61557"/>
        <dbReference type="ChEBI" id="CHEBI:140395"/>
        <dbReference type="EC" id="2.7.7.6"/>
    </reaction>
</comment>
<comment type="subunit">
    <text evidence="1">The RNAP catalytic core consists of 2 alpha, 1 beta, 1 beta' and 1 omega subunit. When a sigma factor is associated with the core the holoenzyme is formed, which can initiate transcription.</text>
</comment>
<comment type="similarity">
    <text evidence="1">Belongs to the RNA polymerase subunit omega family.</text>
</comment>
<gene>
    <name evidence="1" type="primary">rpoZ</name>
    <name type="ordered locus">SEN3563</name>
</gene>
<evidence type="ECO:0000255" key="1">
    <source>
        <dbReference type="HAMAP-Rule" id="MF_00366"/>
    </source>
</evidence>
<dbReference type="EC" id="2.7.7.6" evidence="1"/>
<dbReference type="EMBL" id="AM933172">
    <property type="protein sequence ID" value="CAR35142.1"/>
    <property type="molecule type" value="Genomic_DNA"/>
</dbReference>
<dbReference type="RefSeq" id="WP_000135058.1">
    <property type="nucleotide sequence ID" value="NC_011294.1"/>
</dbReference>
<dbReference type="SMR" id="B5QTY1"/>
<dbReference type="GeneID" id="98390719"/>
<dbReference type="KEGG" id="set:SEN3563"/>
<dbReference type="HOGENOM" id="CLU_125406_5_3_6"/>
<dbReference type="Proteomes" id="UP000000613">
    <property type="component" value="Chromosome"/>
</dbReference>
<dbReference type="GO" id="GO:0000428">
    <property type="term" value="C:DNA-directed RNA polymerase complex"/>
    <property type="evidence" value="ECO:0007669"/>
    <property type="project" value="UniProtKB-KW"/>
</dbReference>
<dbReference type="GO" id="GO:0003677">
    <property type="term" value="F:DNA binding"/>
    <property type="evidence" value="ECO:0007669"/>
    <property type="project" value="UniProtKB-UniRule"/>
</dbReference>
<dbReference type="GO" id="GO:0003899">
    <property type="term" value="F:DNA-directed RNA polymerase activity"/>
    <property type="evidence" value="ECO:0007669"/>
    <property type="project" value="UniProtKB-UniRule"/>
</dbReference>
<dbReference type="GO" id="GO:0006351">
    <property type="term" value="P:DNA-templated transcription"/>
    <property type="evidence" value="ECO:0007669"/>
    <property type="project" value="UniProtKB-UniRule"/>
</dbReference>
<dbReference type="FunFam" id="3.90.940.10:FF:000001">
    <property type="entry name" value="DNA-directed RNA polymerase subunit omega"/>
    <property type="match status" value="1"/>
</dbReference>
<dbReference type="Gene3D" id="3.90.940.10">
    <property type="match status" value="1"/>
</dbReference>
<dbReference type="HAMAP" id="MF_00366">
    <property type="entry name" value="RNApol_bact_RpoZ"/>
    <property type="match status" value="1"/>
</dbReference>
<dbReference type="InterPro" id="IPR003716">
    <property type="entry name" value="DNA-dir_RNA_pol_omega"/>
</dbReference>
<dbReference type="InterPro" id="IPR006110">
    <property type="entry name" value="Pol_omega/Rpo6/RPB6"/>
</dbReference>
<dbReference type="InterPro" id="IPR036161">
    <property type="entry name" value="RPB6/omega-like_sf"/>
</dbReference>
<dbReference type="NCBIfam" id="TIGR00690">
    <property type="entry name" value="rpoZ"/>
    <property type="match status" value="1"/>
</dbReference>
<dbReference type="PANTHER" id="PTHR34476">
    <property type="entry name" value="DNA-DIRECTED RNA POLYMERASE SUBUNIT OMEGA"/>
    <property type="match status" value="1"/>
</dbReference>
<dbReference type="PANTHER" id="PTHR34476:SF1">
    <property type="entry name" value="DNA-DIRECTED RNA POLYMERASE SUBUNIT OMEGA"/>
    <property type="match status" value="1"/>
</dbReference>
<dbReference type="Pfam" id="PF01192">
    <property type="entry name" value="RNA_pol_Rpb6"/>
    <property type="match status" value="1"/>
</dbReference>
<dbReference type="SMART" id="SM01409">
    <property type="entry name" value="RNA_pol_Rpb6"/>
    <property type="match status" value="1"/>
</dbReference>
<dbReference type="SUPFAM" id="SSF63562">
    <property type="entry name" value="RPB6/omega subunit-like"/>
    <property type="match status" value="1"/>
</dbReference>